<feature type="chain" id="PRO_0000400372" description="ATP-dependent zinc metalloprotease FtsH 1">
    <location>
        <begin position="1"/>
        <end position="653"/>
    </location>
</feature>
<feature type="topological domain" description="Cytoplasmic" evidence="1">
    <location>
        <begin position="1"/>
        <end position="30"/>
    </location>
</feature>
<feature type="transmembrane region" description="Helical" evidence="1">
    <location>
        <begin position="31"/>
        <end position="51"/>
    </location>
</feature>
<feature type="topological domain" description="Periplasmic" evidence="1">
    <location>
        <begin position="52"/>
        <end position="126"/>
    </location>
</feature>
<feature type="transmembrane region" description="Helical" evidence="1">
    <location>
        <begin position="127"/>
        <end position="147"/>
    </location>
</feature>
<feature type="topological domain" description="Cytoplasmic" evidence="1">
    <location>
        <begin position="148"/>
        <end position="653"/>
    </location>
</feature>
<feature type="region of interest" description="Disordered" evidence="2">
    <location>
        <begin position="1"/>
        <end position="20"/>
    </location>
</feature>
<feature type="active site" evidence="1">
    <location>
        <position position="442"/>
    </location>
</feature>
<feature type="binding site" evidence="1">
    <location>
        <begin position="219"/>
        <end position="226"/>
    </location>
    <ligand>
        <name>ATP</name>
        <dbReference type="ChEBI" id="CHEBI:30616"/>
    </ligand>
</feature>
<feature type="binding site" evidence="1">
    <location>
        <position position="441"/>
    </location>
    <ligand>
        <name>Zn(2+)</name>
        <dbReference type="ChEBI" id="CHEBI:29105"/>
        <note>catalytic</note>
    </ligand>
</feature>
<feature type="binding site" evidence="1">
    <location>
        <position position="445"/>
    </location>
    <ligand>
        <name>Zn(2+)</name>
        <dbReference type="ChEBI" id="CHEBI:29105"/>
        <note>catalytic</note>
    </ligand>
</feature>
<feature type="binding site" evidence="1">
    <location>
        <position position="518"/>
    </location>
    <ligand>
        <name>Zn(2+)</name>
        <dbReference type="ChEBI" id="CHEBI:29105"/>
        <note>catalytic</note>
    </ligand>
</feature>
<comment type="function">
    <text evidence="1">Acts as a processive, ATP-dependent zinc metallopeptidase for both cytoplasmic and membrane proteins. Plays a role in the quality control of integral membrane proteins.</text>
</comment>
<comment type="cofactor">
    <cofactor evidence="1">
        <name>Zn(2+)</name>
        <dbReference type="ChEBI" id="CHEBI:29105"/>
    </cofactor>
    <text evidence="1">Binds 1 zinc ion per subunit.</text>
</comment>
<comment type="subunit">
    <text evidence="1">Homohexamer.</text>
</comment>
<comment type="subcellular location">
    <subcellularLocation>
        <location evidence="1">Cell inner membrane</location>
        <topology evidence="1">Multi-pass membrane protein</topology>
        <orientation evidence="1">Cytoplasmic side</orientation>
    </subcellularLocation>
</comment>
<comment type="similarity">
    <text evidence="1">In the central section; belongs to the AAA ATPase family.</text>
</comment>
<comment type="similarity">
    <text evidence="1">In the C-terminal section; belongs to the peptidase M41 family.</text>
</comment>
<evidence type="ECO:0000255" key="1">
    <source>
        <dbReference type="HAMAP-Rule" id="MF_01458"/>
    </source>
</evidence>
<evidence type="ECO:0000256" key="2">
    <source>
        <dbReference type="SAM" id="MobiDB-lite"/>
    </source>
</evidence>
<keyword id="KW-0067">ATP-binding</keyword>
<keyword id="KW-0997">Cell inner membrane</keyword>
<keyword id="KW-1003">Cell membrane</keyword>
<keyword id="KW-0378">Hydrolase</keyword>
<keyword id="KW-0472">Membrane</keyword>
<keyword id="KW-0479">Metal-binding</keyword>
<keyword id="KW-0482">Metalloprotease</keyword>
<keyword id="KW-0547">Nucleotide-binding</keyword>
<keyword id="KW-0645">Protease</keyword>
<keyword id="KW-0812">Transmembrane</keyword>
<keyword id="KW-1133">Transmembrane helix</keyword>
<keyword id="KW-0862">Zinc</keyword>
<organism>
    <name type="scientific">Petrotoga mobilis (strain DSM 10674 / SJ95)</name>
    <dbReference type="NCBI Taxonomy" id="403833"/>
    <lineage>
        <taxon>Bacteria</taxon>
        <taxon>Thermotogati</taxon>
        <taxon>Thermotogota</taxon>
        <taxon>Thermotogae</taxon>
        <taxon>Petrotogales</taxon>
        <taxon>Petrotogaceae</taxon>
        <taxon>Petrotoga</taxon>
    </lineage>
</organism>
<name>FTSH1_PETMO</name>
<protein>
    <recommendedName>
        <fullName evidence="1">ATP-dependent zinc metalloprotease FtsH 1</fullName>
        <ecNumber evidence="1">3.4.24.-</ecNumber>
    </recommendedName>
</protein>
<dbReference type="EC" id="3.4.24.-" evidence="1"/>
<dbReference type="EMBL" id="CP000879">
    <property type="protein sequence ID" value="ABX31189.1"/>
    <property type="molecule type" value="Genomic_DNA"/>
</dbReference>
<dbReference type="RefSeq" id="WP_012208293.1">
    <property type="nucleotide sequence ID" value="NC_010003.1"/>
</dbReference>
<dbReference type="SMR" id="A9BFL9"/>
<dbReference type="STRING" id="403833.Pmob_0453"/>
<dbReference type="MEROPS" id="M41.021"/>
<dbReference type="KEGG" id="pmo:Pmob_0453"/>
<dbReference type="eggNOG" id="COG0465">
    <property type="taxonomic scope" value="Bacteria"/>
</dbReference>
<dbReference type="HOGENOM" id="CLU_000688_16_2_0"/>
<dbReference type="OrthoDB" id="9809379at2"/>
<dbReference type="Proteomes" id="UP000000789">
    <property type="component" value="Chromosome"/>
</dbReference>
<dbReference type="GO" id="GO:0005886">
    <property type="term" value="C:plasma membrane"/>
    <property type="evidence" value="ECO:0007669"/>
    <property type="project" value="UniProtKB-SubCell"/>
</dbReference>
<dbReference type="GO" id="GO:0005524">
    <property type="term" value="F:ATP binding"/>
    <property type="evidence" value="ECO:0007669"/>
    <property type="project" value="UniProtKB-UniRule"/>
</dbReference>
<dbReference type="GO" id="GO:0016887">
    <property type="term" value="F:ATP hydrolysis activity"/>
    <property type="evidence" value="ECO:0007669"/>
    <property type="project" value="UniProtKB-UniRule"/>
</dbReference>
<dbReference type="GO" id="GO:0004176">
    <property type="term" value="F:ATP-dependent peptidase activity"/>
    <property type="evidence" value="ECO:0007669"/>
    <property type="project" value="InterPro"/>
</dbReference>
<dbReference type="GO" id="GO:0004222">
    <property type="term" value="F:metalloendopeptidase activity"/>
    <property type="evidence" value="ECO:0007669"/>
    <property type="project" value="InterPro"/>
</dbReference>
<dbReference type="GO" id="GO:0008270">
    <property type="term" value="F:zinc ion binding"/>
    <property type="evidence" value="ECO:0007669"/>
    <property type="project" value="UniProtKB-UniRule"/>
</dbReference>
<dbReference type="GO" id="GO:0030163">
    <property type="term" value="P:protein catabolic process"/>
    <property type="evidence" value="ECO:0007669"/>
    <property type="project" value="UniProtKB-UniRule"/>
</dbReference>
<dbReference type="GO" id="GO:0006508">
    <property type="term" value="P:proteolysis"/>
    <property type="evidence" value="ECO:0007669"/>
    <property type="project" value="UniProtKB-KW"/>
</dbReference>
<dbReference type="CDD" id="cd19501">
    <property type="entry name" value="RecA-like_FtsH"/>
    <property type="match status" value="1"/>
</dbReference>
<dbReference type="FunFam" id="1.10.8.60:FF:000001">
    <property type="entry name" value="ATP-dependent zinc metalloprotease FtsH"/>
    <property type="match status" value="1"/>
</dbReference>
<dbReference type="FunFam" id="1.20.58.760:FF:000001">
    <property type="entry name" value="ATP-dependent zinc metalloprotease FtsH"/>
    <property type="match status" value="1"/>
</dbReference>
<dbReference type="FunFam" id="3.40.50.300:FF:000001">
    <property type="entry name" value="ATP-dependent zinc metalloprotease FtsH"/>
    <property type="match status" value="1"/>
</dbReference>
<dbReference type="Gene3D" id="1.10.8.60">
    <property type="match status" value="1"/>
</dbReference>
<dbReference type="Gene3D" id="3.30.720.210">
    <property type="match status" value="1"/>
</dbReference>
<dbReference type="Gene3D" id="3.40.50.300">
    <property type="entry name" value="P-loop containing nucleotide triphosphate hydrolases"/>
    <property type="match status" value="1"/>
</dbReference>
<dbReference type="Gene3D" id="1.20.58.760">
    <property type="entry name" value="Peptidase M41"/>
    <property type="match status" value="1"/>
</dbReference>
<dbReference type="HAMAP" id="MF_01458">
    <property type="entry name" value="FtsH"/>
    <property type="match status" value="1"/>
</dbReference>
<dbReference type="InterPro" id="IPR003593">
    <property type="entry name" value="AAA+_ATPase"/>
</dbReference>
<dbReference type="InterPro" id="IPR041569">
    <property type="entry name" value="AAA_lid_3"/>
</dbReference>
<dbReference type="InterPro" id="IPR003959">
    <property type="entry name" value="ATPase_AAA_core"/>
</dbReference>
<dbReference type="InterPro" id="IPR003960">
    <property type="entry name" value="ATPase_AAA_CS"/>
</dbReference>
<dbReference type="InterPro" id="IPR005936">
    <property type="entry name" value="FtsH"/>
</dbReference>
<dbReference type="InterPro" id="IPR027417">
    <property type="entry name" value="P-loop_NTPase"/>
</dbReference>
<dbReference type="InterPro" id="IPR011546">
    <property type="entry name" value="Pept_M41_FtsH_extracell"/>
</dbReference>
<dbReference type="InterPro" id="IPR000642">
    <property type="entry name" value="Peptidase_M41"/>
</dbReference>
<dbReference type="InterPro" id="IPR037219">
    <property type="entry name" value="Peptidase_M41-like"/>
</dbReference>
<dbReference type="NCBIfam" id="TIGR01241">
    <property type="entry name" value="FtsH_fam"/>
    <property type="match status" value="1"/>
</dbReference>
<dbReference type="PANTHER" id="PTHR23076:SF97">
    <property type="entry name" value="ATP-DEPENDENT ZINC METALLOPROTEASE YME1L1"/>
    <property type="match status" value="1"/>
</dbReference>
<dbReference type="PANTHER" id="PTHR23076">
    <property type="entry name" value="METALLOPROTEASE M41 FTSH"/>
    <property type="match status" value="1"/>
</dbReference>
<dbReference type="Pfam" id="PF00004">
    <property type="entry name" value="AAA"/>
    <property type="match status" value="1"/>
</dbReference>
<dbReference type="Pfam" id="PF17862">
    <property type="entry name" value="AAA_lid_3"/>
    <property type="match status" value="1"/>
</dbReference>
<dbReference type="Pfam" id="PF06480">
    <property type="entry name" value="FtsH_ext"/>
    <property type="match status" value="1"/>
</dbReference>
<dbReference type="Pfam" id="PF01434">
    <property type="entry name" value="Peptidase_M41"/>
    <property type="match status" value="1"/>
</dbReference>
<dbReference type="SMART" id="SM00382">
    <property type="entry name" value="AAA"/>
    <property type="match status" value="1"/>
</dbReference>
<dbReference type="SUPFAM" id="SSF140990">
    <property type="entry name" value="FtsH protease domain-like"/>
    <property type="match status" value="1"/>
</dbReference>
<dbReference type="SUPFAM" id="SSF52540">
    <property type="entry name" value="P-loop containing nucleoside triphosphate hydrolases"/>
    <property type="match status" value="1"/>
</dbReference>
<dbReference type="PROSITE" id="PS00674">
    <property type="entry name" value="AAA"/>
    <property type="match status" value="1"/>
</dbReference>
<accession>A9BFL9</accession>
<reference key="1">
    <citation type="submission" date="2007-11" db="EMBL/GenBank/DDBJ databases">
        <title>Complete sequence of Petroga mobilis SJ95.</title>
        <authorList>
            <consortium name="US DOE Joint Genome Institute"/>
            <person name="Copeland A."/>
            <person name="Lucas S."/>
            <person name="Lapidus A."/>
            <person name="Barry K."/>
            <person name="Glavina del Rio T."/>
            <person name="Dalin E."/>
            <person name="Tice H."/>
            <person name="Pitluck S."/>
            <person name="Meincke L."/>
            <person name="Brettin T."/>
            <person name="Bruce D."/>
            <person name="Detter J.C."/>
            <person name="Han C."/>
            <person name="Kuske C.R."/>
            <person name="Schmutz J."/>
            <person name="Larimer F."/>
            <person name="Land M."/>
            <person name="Hauser L."/>
            <person name="Kyrpides N."/>
            <person name="Mikhailova N."/>
            <person name="Noll K."/>
            <person name="Richardson P."/>
        </authorList>
    </citation>
    <scope>NUCLEOTIDE SEQUENCE [LARGE SCALE GENOMIC DNA]</scope>
    <source>
        <strain>DSM 10674 / SJ95</strain>
    </source>
</reference>
<sequence>MPENKNDKENKNDKENKNTKEEKKKVKFSNIIWVYIIFAVFFIGALISLNWENNPIISYSEMLSLINDGQVESMKINQNGNVEILSKDGTTYESFSPALVIDKQYVNSLIQKGIKVEYVESVGTKWWFGLLINIIPIVVMVLFFFWLYRSASAGARSSMNFGKSGAKKYEPIGEKVTFKDVAGIDEVLDEIEDIVKFLKNPQEFQELGARMPKGTLLVGPPGTGKTLTARAIAGEADVPFYYASGSDFVELFVGVGASRVRDLFKTAKENAPAIIFIDELDAVGRQRGAGLGGGNDEREQTLNALLVELDGFDTSTGVVVMAATNRPDVLDKALLRPGRFDKKIMVGPPDVKGREEILKIHTRKKKIAPDVDLKLLAKRTPGFVGADLENLVNEAALIASRKKKNQVEMSDFEEAIDRVLTGPSKKYRIISDKEKKILSYHELGHAVLAYLLPNTDPVYKITIIPRGAGSLGSTLQIPEKDKYLIKKSEILDRIVVALGGRASEKLVFNFATTGAKDDLRKATDYAKSMIYRLGMSKRMGPVYWEGEEEEIFLGSELTKQRNYSEETAKELDVEVKKIINSMYDKALELLKQNRERLDLLASYIFKNETIYGEEFKKLMSKDLEELKEYIGGEKEINEFLKIDVVNHVNYQPV</sequence>
<gene>
    <name evidence="1" type="primary">ftsH1</name>
    <name type="ordered locus">Pmob_0453</name>
</gene>
<proteinExistence type="inferred from homology"/>